<accession>A6TF98</accession>
<name>ARNA_KLEP7</name>
<organism>
    <name type="scientific">Klebsiella pneumoniae subsp. pneumoniae (strain ATCC 700721 / MGH 78578)</name>
    <dbReference type="NCBI Taxonomy" id="272620"/>
    <lineage>
        <taxon>Bacteria</taxon>
        <taxon>Pseudomonadati</taxon>
        <taxon>Pseudomonadota</taxon>
        <taxon>Gammaproteobacteria</taxon>
        <taxon>Enterobacterales</taxon>
        <taxon>Enterobacteriaceae</taxon>
        <taxon>Klebsiella/Raoultella group</taxon>
        <taxon>Klebsiella</taxon>
        <taxon>Klebsiella pneumoniae complex</taxon>
    </lineage>
</organism>
<reference key="1">
    <citation type="submission" date="2006-09" db="EMBL/GenBank/DDBJ databases">
        <authorList>
            <consortium name="The Klebsiella pneumonia Genome Sequencing Project"/>
            <person name="McClelland M."/>
            <person name="Sanderson E.K."/>
            <person name="Spieth J."/>
            <person name="Clifton W.S."/>
            <person name="Latreille P."/>
            <person name="Sabo A."/>
            <person name="Pepin K."/>
            <person name="Bhonagiri V."/>
            <person name="Porwollik S."/>
            <person name="Ali J."/>
            <person name="Wilson R.K."/>
        </authorList>
    </citation>
    <scope>NUCLEOTIDE SEQUENCE [LARGE SCALE GENOMIC DNA]</scope>
    <source>
        <strain>ATCC 700721 / MGH 78578</strain>
    </source>
</reference>
<gene>
    <name evidence="1" type="primary">arnA</name>
    <name type="ordered locus">KPN78578_38080</name>
    <name type="ORF">KPN_03845</name>
</gene>
<comment type="function">
    <text evidence="1">Bifunctional enzyme that catalyzes the oxidative decarboxylation of UDP-glucuronic acid (UDP-GlcUA) to UDP-4-keto-arabinose (UDP-Ara4O) and the addition of a formyl group to UDP-4-amino-4-deoxy-L-arabinose (UDP-L-Ara4N) to form UDP-L-4-formamido-arabinose (UDP-L-Ara4FN). The modified arabinose is attached to lipid A and is required for resistance to polymyxin and cationic antimicrobial peptides.</text>
</comment>
<comment type="catalytic activity">
    <reaction evidence="1">
        <text>UDP-alpha-D-glucuronate + NAD(+) = UDP-beta-L-threo-pentopyranos-4-ulose + CO2 + NADH</text>
        <dbReference type="Rhea" id="RHEA:24702"/>
        <dbReference type="ChEBI" id="CHEBI:16526"/>
        <dbReference type="ChEBI" id="CHEBI:57540"/>
        <dbReference type="ChEBI" id="CHEBI:57945"/>
        <dbReference type="ChEBI" id="CHEBI:58052"/>
        <dbReference type="ChEBI" id="CHEBI:58710"/>
        <dbReference type="EC" id="1.1.1.305"/>
    </reaction>
</comment>
<comment type="catalytic activity">
    <reaction evidence="1">
        <text>UDP-4-amino-4-deoxy-beta-L-arabinose + (6R)-10-formyltetrahydrofolate = UDP-4-deoxy-4-formamido-beta-L-arabinose + (6S)-5,6,7,8-tetrahydrofolate + H(+)</text>
        <dbReference type="Rhea" id="RHEA:24706"/>
        <dbReference type="ChEBI" id="CHEBI:15378"/>
        <dbReference type="ChEBI" id="CHEBI:57453"/>
        <dbReference type="ChEBI" id="CHEBI:58708"/>
        <dbReference type="ChEBI" id="CHEBI:58709"/>
        <dbReference type="ChEBI" id="CHEBI:195366"/>
        <dbReference type="EC" id="2.1.2.13"/>
    </reaction>
</comment>
<comment type="pathway">
    <text evidence="1">Nucleotide-sugar biosynthesis; UDP-4-deoxy-4-formamido-beta-L-arabinose biosynthesis; UDP-4-deoxy-4-formamido-beta-L-arabinose from UDP-alpha-D-glucuronate: step 1/3.</text>
</comment>
<comment type="pathway">
    <text evidence="1">Nucleotide-sugar biosynthesis; UDP-4-deoxy-4-formamido-beta-L-arabinose biosynthesis; UDP-4-deoxy-4-formamido-beta-L-arabinose from UDP-alpha-D-glucuronate: step 3/3.</text>
</comment>
<comment type="pathway">
    <text evidence="1">Bacterial outer membrane biogenesis; lipopolysaccharide biosynthesis.</text>
</comment>
<comment type="subunit">
    <text evidence="1">Homohexamer, formed by a dimer of trimers.</text>
</comment>
<comment type="similarity">
    <text evidence="1">In the N-terminal section; belongs to the Fmt family. UDP-L-Ara4N formyltransferase subfamily.</text>
</comment>
<comment type="similarity">
    <text evidence="1">In the C-terminal section; belongs to the NAD(P)-dependent epimerase/dehydratase family. UDP-glucuronic acid decarboxylase subfamily.</text>
</comment>
<dbReference type="EC" id="2.1.2.13" evidence="1"/>
<dbReference type="EC" id="1.1.1.305" evidence="1"/>
<dbReference type="EMBL" id="CP000647">
    <property type="protein sequence ID" value="ABR79232.1"/>
    <property type="molecule type" value="Genomic_DNA"/>
</dbReference>
<dbReference type="RefSeq" id="WP_004173963.1">
    <property type="nucleotide sequence ID" value="NC_009648.1"/>
</dbReference>
<dbReference type="SMR" id="A6TF98"/>
<dbReference type="STRING" id="272620.KPN_03845"/>
<dbReference type="jPOST" id="A6TF98"/>
<dbReference type="PaxDb" id="272620-KPN_03845"/>
<dbReference type="EnsemblBacteria" id="ABR79232">
    <property type="protein sequence ID" value="ABR79232"/>
    <property type="gene ID" value="KPN_03845"/>
</dbReference>
<dbReference type="KEGG" id="kpn:KPN_03845"/>
<dbReference type="HOGENOM" id="CLU_007383_23_2_6"/>
<dbReference type="UniPathway" id="UPA00030"/>
<dbReference type="UniPathway" id="UPA00032">
    <property type="reaction ID" value="UER00492"/>
</dbReference>
<dbReference type="UniPathway" id="UPA00032">
    <property type="reaction ID" value="UER00494"/>
</dbReference>
<dbReference type="PHI-base" id="PHI:7951"/>
<dbReference type="Proteomes" id="UP000000265">
    <property type="component" value="Chromosome"/>
</dbReference>
<dbReference type="GO" id="GO:0016020">
    <property type="term" value="C:membrane"/>
    <property type="evidence" value="ECO:0007669"/>
    <property type="project" value="GOC"/>
</dbReference>
<dbReference type="GO" id="GO:0016831">
    <property type="term" value="F:carboxy-lyase activity"/>
    <property type="evidence" value="ECO:0007669"/>
    <property type="project" value="InterPro"/>
</dbReference>
<dbReference type="GO" id="GO:0099619">
    <property type="term" value="F:UDP-4-amino-4-deoxy-L-arabinose formyltransferase activity"/>
    <property type="evidence" value="ECO:0007669"/>
    <property type="project" value="UniProtKB-EC"/>
</dbReference>
<dbReference type="GO" id="GO:0099618">
    <property type="term" value="F:UDP-glucuronate dehydrogenase activity"/>
    <property type="evidence" value="ECO:0007669"/>
    <property type="project" value="UniProtKB-EC"/>
</dbReference>
<dbReference type="GO" id="GO:0009245">
    <property type="term" value="P:lipid A biosynthetic process"/>
    <property type="evidence" value="ECO:0007669"/>
    <property type="project" value="UniProtKB-KW"/>
</dbReference>
<dbReference type="GO" id="GO:0009103">
    <property type="term" value="P:lipopolysaccharide biosynthetic process"/>
    <property type="evidence" value="ECO:0007669"/>
    <property type="project" value="UniProtKB-UniRule"/>
</dbReference>
<dbReference type="GO" id="GO:0046677">
    <property type="term" value="P:response to antibiotic"/>
    <property type="evidence" value="ECO:0007669"/>
    <property type="project" value="UniProtKB-KW"/>
</dbReference>
<dbReference type="CDD" id="cd08702">
    <property type="entry name" value="Arna_FMT_C"/>
    <property type="match status" value="1"/>
</dbReference>
<dbReference type="CDD" id="cd05257">
    <property type="entry name" value="Arna_like_SDR_e"/>
    <property type="match status" value="1"/>
</dbReference>
<dbReference type="CDD" id="cd08644">
    <property type="entry name" value="FMT_core_ArnA_N"/>
    <property type="match status" value="1"/>
</dbReference>
<dbReference type="FunFam" id="3.40.50.720:FF:000197">
    <property type="entry name" value="Bifunctional polymyxin resistance protein ArnA"/>
    <property type="match status" value="1"/>
</dbReference>
<dbReference type="Gene3D" id="3.40.50.12230">
    <property type="match status" value="1"/>
</dbReference>
<dbReference type="Gene3D" id="3.40.50.720">
    <property type="entry name" value="NAD(P)-binding Rossmann-like Domain"/>
    <property type="match status" value="1"/>
</dbReference>
<dbReference type="HAMAP" id="MF_01166">
    <property type="entry name" value="ArnA"/>
    <property type="match status" value="1"/>
</dbReference>
<dbReference type="InterPro" id="IPR045869">
    <property type="entry name" value="Arna-like_SDR_e"/>
</dbReference>
<dbReference type="InterPro" id="IPR021168">
    <property type="entry name" value="Bifun_polymyxin_resist_ArnA"/>
</dbReference>
<dbReference type="InterPro" id="IPR001509">
    <property type="entry name" value="Epimerase_deHydtase"/>
</dbReference>
<dbReference type="InterPro" id="IPR005793">
    <property type="entry name" value="Formyl_trans_C"/>
</dbReference>
<dbReference type="InterPro" id="IPR002376">
    <property type="entry name" value="Formyl_transf_N"/>
</dbReference>
<dbReference type="InterPro" id="IPR036477">
    <property type="entry name" value="Formyl_transf_N_sf"/>
</dbReference>
<dbReference type="InterPro" id="IPR011034">
    <property type="entry name" value="Formyl_transferase-like_C_sf"/>
</dbReference>
<dbReference type="InterPro" id="IPR050177">
    <property type="entry name" value="Lipid_A_modif_metabolic_enz"/>
</dbReference>
<dbReference type="InterPro" id="IPR036291">
    <property type="entry name" value="NAD(P)-bd_dom_sf"/>
</dbReference>
<dbReference type="NCBIfam" id="NF005414">
    <property type="entry name" value="PRK06988.1"/>
    <property type="match status" value="1"/>
</dbReference>
<dbReference type="NCBIfam" id="NF005998">
    <property type="entry name" value="PRK08125.1"/>
    <property type="match status" value="1"/>
</dbReference>
<dbReference type="NCBIfam" id="NF008872">
    <property type="entry name" value="PRK11908.1"/>
    <property type="match status" value="1"/>
</dbReference>
<dbReference type="PANTHER" id="PTHR43245">
    <property type="entry name" value="BIFUNCTIONAL POLYMYXIN RESISTANCE PROTEIN ARNA"/>
    <property type="match status" value="1"/>
</dbReference>
<dbReference type="PANTHER" id="PTHR43245:SF13">
    <property type="entry name" value="UDP-D-APIOSE_UDP-D-XYLOSE SYNTHASE 2"/>
    <property type="match status" value="1"/>
</dbReference>
<dbReference type="Pfam" id="PF01370">
    <property type="entry name" value="Epimerase"/>
    <property type="match status" value="1"/>
</dbReference>
<dbReference type="Pfam" id="PF02911">
    <property type="entry name" value="Formyl_trans_C"/>
    <property type="match status" value="1"/>
</dbReference>
<dbReference type="Pfam" id="PF00551">
    <property type="entry name" value="Formyl_trans_N"/>
    <property type="match status" value="1"/>
</dbReference>
<dbReference type="PIRSF" id="PIRSF036506">
    <property type="entry name" value="Bifun_polymyxin_resist_ArnA"/>
    <property type="match status" value="1"/>
</dbReference>
<dbReference type="SUPFAM" id="SSF50486">
    <property type="entry name" value="FMT C-terminal domain-like"/>
    <property type="match status" value="1"/>
</dbReference>
<dbReference type="SUPFAM" id="SSF53328">
    <property type="entry name" value="Formyltransferase"/>
    <property type="match status" value="1"/>
</dbReference>
<dbReference type="SUPFAM" id="SSF51735">
    <property type="entry name" value="NAD(P)-binding Rossmann-fold domains"/>
    <property type="match status" value="1"/>
</dbReference>
<protein>
    <recommendedName>
        <fullName evidence="1">Bifunctional polymyxin resistance protein ArnA</fullName>
    </recommendedName>
    <domain>
        <recommendedName>
            <fullName evidence="1">UDP-4-amino-4-deoxy-L-arabinose formyltransferase</fullName>
            <ecNumber evidence="1">2.1.2.13</ecNumber>
        </recommendedName>
        <alternativeName>
            <fullName evidence="1">ArnAFT</fullName>
        </alternativeName>
        <alternativeName>
            <fullName evidence="1">UDP-L-Ara4N formyltransferase</fullName>
        </alternativeName>
    </domain>
    <domain>
        <recommendedName>
            <fullName evidence="1">UDP-glucuronic acid oxidase, UDP-4-keto-hexauronic acid decarboxylating</fullName>
            <ecNumber evidence="1">1.1.1.305</ecNumber>
        </recommendedName>
        <alternativeName>
            <fullName evidence="1">ArnADH</fullName>
        </alternativeName>
        <alternativeName>
            <fullName evidence="1">UDP-GlcUA decarboxylase</fullName>
        </alternativeName>
        <alternativeName>
            <fullName evidence="1">UDP-glucuronic acid dehydrogenase</fullName>
        </alternativeName>
    </domain>
</protein>
<feature type="chain" id="PRO_1000065677" description="Bifunctional polymyxin resistance protein ArnA">
    <location>
        <begin position="1"/>
        <end position="661"/>
    </location>
</feature>
<feature type="region of interest" description="Formyltransferase ArnAFT">
    <location>
        <begin position="1"/>
        <end position="304"/>
    </location>
</feature>
<feature type="region of interest" description="Dehydrogenase ArnADH">
    <location>
        <begin position="314"/>
        <end position="661"/>
    </location>
</feature>
<feature type="active site" description="Proton donor; for formyltransferase activity" evidence="1">
    <location>
        <position position="104"/>
    </location>
</feature>
<feature type="active site" description="Proton acceptor; for decarboxylase activity" evidence="1">
    <location>
        <position position="434"/>
    </location>
</feature>
<feature type="active site" description="Proton donor; for decarboxylase activity" evidence="1">
    <location>
        <position position="619"/>
    </location>
</feature>
<feature type="binding site" evidence="1">
    <location>
        <position position="114"/>
    </location>
    <ligand>
        <name>(6R)-10-formyltetrahydrofolate</name>
        <dbReference type="ChEBI" id="CHEBI:195366"/>
    </ligand>
</feature>
<feature type="binding site" evidence="1">
    <location>
        <begin position="136"/>
        <end position="140"/>
    </location>
    <ligand>
        <name>(6R)-10-formyltetrahydrofolate</name>
        <dbReference type="ChEBI" id="CHEBI:195366"/>
    </ligand>
</feature>
<feature type="binding site" evidence="1">
    <location>
        <position position="347"/>
    </location>
    <ligand>
        <name>NAD(+)</name>
        <dbReference type="ChEBI" id="CHEBI:57540"/>
    </ligand>
</feature>
<feature type="binding site" evidence="1">
    <location>
        <begin position="368"/>
        <end position="369"/>
    </location>
    <ligand>
        <name>NAD(+)</name>
        <dbReference type="ChEBI" id="CHEBI:57540"/>
    </ligand>
</feature>
<feature type="binding site" evidence="1">
    <location>
        <position position="393"/>
    </location>
    <ligand>
        <name>UDP-alpha-D-glucuronate</name>
        <dbReference type="ChEBI" id="CHEBI:58052"/>
    </ligand>
</feature>
<feature type="binding site" evidence="1">
    <location>
        <position position="398"/>
    </location>
    <ligand>
        <name>UDP-alpha-D-glucuronate</name>
        <dbReference type="ChEBI" id="CHEBI:58052"/>
    </ligand>
</feature>
<feature type="binding site" evidence="1">
    <location>
        <begin position="432"/>
        <end position="433"/>
    </location>
    <ligand>
        <name>UDP-alpha-D-glucuronate</name>
        <dbReference type="ChEBI" id="CHEBI:58052"/>
    </ligand>
</feature>
<feature type="binding site" evidence="1">
    <location>
        <position position="460"/>
    </location>
    <ligand>
        <name>UDP-alpha-D-glucuronate</name>
        <dbReference type="ChEBI" id="CHEBI:58052"/>
    </ligand>
</feature>
<feature type="binding site" evidence="1">
    <location>
        <position position="492"/>
    </location>
    <ligand>
        <name>UDP-alpha-D-glucuronate</name>
        <dbReference type="ChEBI" id="CHEBI:58052"/>
    </ligand>
</feature>
<feature type="binding site" evidence="1">
    <location>
        <begin position="526"/>
        <end position="535"/>
    </location>
    <ligand>
        <name>UDP-alpha-D-glucuronate</name>
        <dbReference type="ChEBI" id="CHEBI:58052"/>
    </ligand>
</feature>
<feature type="binding site" evidence="1">
    <location>
        <position position="613"/>
    </location>
    <ligand>
        <name>UDP-alpha-D-glucuronate</name>
        <dbReference type="ChEBI" id="CHEBI:58052"/>
    </ligand>
</feature>
<feature type="site" description="Transition state stabilizer" evidence="1">
    <location>
        <position position="102"/>
    </location>
</feature>
<feature type="site" description="Raises pKa of active site His" evidence="1">
    <location>
        <position position="140"/>
    </location>
</feature>
<sequence length="661" mass="74045">MKAVVFAYHDMGCTGIQALLDAGYDIAAIFTHPDNPGENHFFGSVARLAAEQGIPVWAPEDVNHPLWIERIREMKPDVLFSFYYRNLLGDEILNLAPKGAFNLHGSLLPKYRGRAPLNWVLVNGESETGVTLHRMVNRADAGDIVAQQAVAIGADDAALTLHRKLCAAATELLSRALPAILAGTTDERPQDHSQATYVGRRTPEDGRLDWELPAQTLHNLVRAVSDPWPGAFGYAGANKFIVWKSRVRHDLPAAKPGTVLSIAPLIVACQDGALEIVTGQTERGVYMQGAQLAQALGLVSGAVISSKPVVAIKRRTRVLILGVNGFIGNHLTERLLQDDNYEIYGLDIGSDAISRFLDCPRFHFVEGDISIHSEWIEYHIKKCDVVLPLVAIATPIEYTRNPLRVFELDFEENLKIIRDCVKYNKRIIFPSTSEVYGMCTDKNFDEDSSNLVVGPINKQRWIYSVSKQLLDRVIWAYGDKNGLKFTLFRPFNWMGPRLDNLNAARIGSSRAITQLILNLVEGSPIKLIEGGKQKRCFTDISDGIEALFRIIENKDGRCDGQIINIGNPDNEASIKELAEMLLACFERHPLRDRFPPFAGFREVESSDYYGKGYQDVEHRKPSIRNAKRCLNWEPKVEMEETVEHTLDFFLRTVELVDDKNP</sequence>
<evidence type="ECO:0000255" key="1">
    <source>
        <dbReference type="HAMAP-Rule" id="MF_01166"/>
    </source>
</evidence>
<keyword id="KW-0046">Antibiotic resistance</keyword>
<keyword id="KW-0441">Lipid A biosynthesis</keyword>
<keyword id="KW-0444">Lipid biosynthesis</keyword>
<keyword id="KW-0443">Lipid metabolism</keyword>
<keyword id="KW-0448">Lipopolysaccharide biosynthesis</keyword>
<keyword id="KW-0511">Multifunctional enzyme</keyword>
<keyword id="KW-0520">NAD</keyword>
<keyword id="KW-0560">Oxidoreductase</keyword>
<keyword id="KW-0808">Transferase</keyword>
<proteinExistence type="inferred from homology"/>